<dbReference type="EMBL" id="CP000076">
    <property type="protein sequence ID" value="AAY96226.1"/>
    <property type="molecule type" value="Genomic_DNA"/>
</dbReference>
<dbReference type="RefSeq" id="WP_011059187.1">
    <property type="nucleotide sequence ID" value="NC_004129.6"/>
</dbReference>
<dbReference type="SMR" id="Q4KIH2"/>
<dbReference type="STRING" id="220664.PFL_0826"/>
<dbReference type="GeneID" id="57473826"/>
<dbReference type="KEGG" id="pfl:PFL_0826"/>
<dbReference type="PATRIC" id="fig|220664.5.peg.847"/>
<dbReference type="eggNOG" id="COG0576">
    <property type="taxonomic scope" value="Bacteria"/>
</dbReference>
<dbReference type="HOGENOM" id="CLU_057217_6_0_6"/>
<dbReference type="Proteomes" id="UP000008540">
    <property type="component" value="Chromosome"/>
</dbReference>
<dbReference type="GO" id="GO:0005829">
    <property type="term" value="C:cytosol"/>
    <property type="evidence" value="ECO:0007669"/>
    <property type="project" value="TreeGrafter"/>
</dbReference>
<dbReference type="GO" id="GO:0000774">
    <property type="term" value="F:adenyl-nucleotide exchange factor activity"/>
    <property type="evidence" value="ECO:0007669"/>
    <property type="project" value="InterPro"/>
</dbReference>
<dbReference type="GO" id="GO:0042803">
    <property type="term" value="F:protein homodimerization activity"/>
    <property type="evidence" value="ECO:0007669"/>
    <property type="project" value="InterPro"/>
</dbReference>
<dbReference type="GO" id="GO:0051087">
    <property type="term" value="F:protein-folding chaperone binding"/>
    <property type="evidence" value="ECO:0007669"/>
    <property type="project" value="InterPro"/>
</dbReference>
<dbReference type="GO" id="GO:0051082">
    <property type="term" value="F:unfolded protein binding"/>
    <property type="evidence" value="ECO:0007669"/>
    <property type="project" value="TreeGrafter"/>
</dbReference>
<dbReference type="GO" id="GO:0006457">
    <property type="term" value="P:protein folding"/>
    <property type="evidence" value="ECO:0007669"/>
    <property type="project" value="InterPro"/>
</dbReference>
<dbReference type="CDD" id="cd00446">
    <property type="entry name" value="GrpE"/>
    <property type="match status" value="1"/>
</dbReference>
<dbReference type="FunFam" id="2.30.22.10:FF:000001">
    <property type="entry name" value="Protein GrpE"/>
    <property type="match status" value="1"/>
</dbReference>
<dbReference type="Gene3D" id="3.90.20.20">
    <property type="match status" value="1"/>
</dbReference>
<dbReference type="Gene3D" id="2.30.22.10">
    <property type="entry name" value="Head domain of nucleotide exchange factor GrpE"/>
    <property type="match status" value="1"/>
</dbReference>
<dbReference type="HAMAP" id="MF_01151">
    <property type="entry name" value="GrpE"/>
    <property type="match status" value="1"/>
</dbReference>
<dbReference type="InterPro" id="IPR000740">
    <property type="entry name" value="GrpE"/>
</dbReference>
<dbReference type="InterPro" id="IPR013805">
    <property type="entry name" value="GrpE_coiled_coil"/>
</dbReference>
<dbReference type="InterPro" id="IPR009012">
    <property type="entry name" value="GrpE_head"/>
</dbReference>
<dbReference type="NCBIfam" id="NF010737">
    <property type="entry name" value="PRK14139.1"/>
    <property type="match status" value="1"/>
</dbReference>
<dbReference type="NCBIfam" id="NF010738">
    <property type="entry name" value="PRK14140.1"/>
    <property type="match status" value="1"/>
</dbReference>
<dbReference type="NCBIfam" id="NF010748">
    <property type="entry name" value="PRK14150.1"/>
    <property type="match status" value="1"/>
</dbReference>
<dbReference type="NCBIfam" id="NF010749">
    <property type="entry name" value="PRK14151.1"/>
    <property type="match status" value="1"/>
</dbReference>
<dbReference type="PANTHER" id="PTHR21237">
    <property type="entry name" value="GRPE PROTEIN"/>
    <property type="match status" value="1"/>
</dbReference>
<dbReference type="PANTHER" id="PTHR21237:SF23">
    <property type="entry name" value="GRPE PROTEIN HOMOLOG, MITOCHONDRIAL"/>
    <property type="match status" value="1"/>
</dbReference>
<dbReference type="Pfam" id="PF01025">
    <property type="entry name" value="GrpE"/>
    <property type="match status" value="1"/>
</dbReference>
<dbReference type="PRINTS" id="PR00773">
    <property type="entry name" value="GRPEPROTEIN"/>
</dbReference>
<dbReference type="SUPFAM" id="SSF58014">
    <property type="entry name" value="Coiled-coil domain of nucleotide exchange factor GrpE"/>
    <property type="match status" value="1"/>
</dbReference>
<dbReference type="SUPFAM" id="SSF51064">
    <property type="entry name" value="Head domain of nucleotide exchange factor GrpE"/>
    <property type="match status" value="1"/>
</dbReference>
<dbReference type="PROSITE" id="PS01071">
    <property type="entry name" value="GRPE"/>
    <property type="match status" value="1"/>
</dbReference>
<evidence type="ECO:0000255" key="1">
    <source>
        <dbReference type="HAMAP-Rule" id="MF_01151"/>
    </source>
</evidence>
<evidence type="ECO:0000256" key="2">
    <source>
        <dbReference type="SAM" id="MobiDB-lite"/>
    </source>
</evidence>
<feature type="chain" id="PRO_1000053622" description="Protein GrpE">
    <location>
        <begin position="1"/>
        <end position="188"/>
    </location>
</feature>
<feature type="region of interest" description="Disordered" evidence="2">
    <location>
        <begin position="1"/>
        <end position="22"/>
    </location>
</feature>
<sequence>MADEQTLDTQNLDANQAPEASGDDLAARVQVLEEQLAGAQDQALRVAADLQNVRRRAEQDVEKAHKFALEKFAGDLLPVIDSLERGLELSNPDDESIRPMREGIELTLKMFHDTLKRYQLEAIDPHGEPFNAEQHQAMAMQESADVEPNSVLKVFQKGYQLNGRLLRPAMVVVSKAPAPVSPSIDEKA</sequence>
<gene>
    <name evidence="1" type="primary">grpE</name>
    <name type="ordered locus">PFL_0826</name>
</gene>
<keyword id="KW-0143">Chaperone</keyword>
<keyword id="KW-0963">Cytoplasm</keyword>
<keyword id="KW-0346">Stress response</keyword>
<accession>Q4KIH2</accession>
<reference key="1">
    <citation type="journal article" date="2005" name="Nat. Biotechnol.">
        <title>Complete genome sequence of the plant commensal Pseudomonas fluorescens Pf-5.</title>
        <authorList>
            <person name="Paulsen I.T."/>
            <person name="Press C.M."/>
            <person name="Ravel J."/>
            <person name="Kobayashi D.Y."/>
            <person name="Myers G.S.A."/>
            <person name="Mavrodi D.V."/>
            <person name="DeBoy R.T."/>
            <person name="Seshadri R."/>
            <person name="Ren Q."/>
            <person name="Madupu R."/>
            <person name="Dodson R.J."/>
            <person name="Durkin A.S."/>
            <person name="Brinkac L.M."/>
            <person name="Daugherty S.C."/>
            <person name="Sullivan S.A."/>
            <person name="Rosovitz M.J."/>
            <person name="Gwinn M.L."/>
            <person name="Zhou L."/>
            <person name="Schneider D.J."/>
            <person name="Cartinhour S.W."/>
            <person name="Nelson W.C."/>
            <person name="Weidman J."/>
            <person name="Watkins K."/>
            <person name="Tran K."/>
            <person name="Khouri H."/>
            <person name="Pierson E.A."/>
            <person name="Pierson L.S. III"/>
            <person name="Thomashow L.S."/>
            <person name="Loper J.E."/>
        </authorList>
    </citation>
    <scope>NUCLEOTIDE SEQUENCE [LARGE SCALE GENOMIC DNA]</scope>
    <source>
        <strain>ATCC BAA-477 / NRRL B-23932 / Pf-5</strain>
    </source>
</reference>
<comment type="function">
    <text evidence="1">Participates actively in the response to hyperosmotic and heat shock by preventing the aggregation of stress-denatured proteins, in association with DnaK and GrpE. It is the nucleotide exchange factor for DnaK and may function as a thermosensor. Unfolded proteins bind initially to DnaJ; upon interaction with the DnaJ-bound protein, DnaK hydrolyzes its bound ATP, resulting in the formation of a stable complex. GrpE releases ADP from DnaK; ATP binding to DnaK triggers the release of the substrate protein, thus completing the reaction cycle. Several rounds of ATP-dependent interactions between DnaJ, DnaK and GrpE are required for fully efficient folding.</text>
</comment>
<comment type="subunit">
    <text evidence="1">Homodimer.</text>
</comment>
<comment type="subcellular location">
    <subcellularLocation>
        <location evidence="1">Cytoplasm</location>
    </subcellularLocation>
</comment>
<comment type="similarity">
    <text evidence="1">Belongs to the GrpE family.</text>
</comment>
<organism>
    <name type="scientific">Pseudomonas fluorescens (strain ATCC BAA-477 / NRRL B-23932 / Pf-5)</name>
    <dbReference type="NCBI Taxonomy" id="220664"/>
    <lineage>
        <taxon>Bacteria</taxon>
        <taxon>Pseudomonadati</taxon>
        <taxon>Pseudomonadota</taxon>
        <taxon>Gammaproteobacteria</taxon>
        <taxon>Pseudomonadales</taxon>
        <taxon>Pseudomonadaceae</taxon>
        <taxon>Pseudomonas</taxon>
    </lineage>
</organism>
<protein>
    <recommendedName>
        <fullName evidence="1">Protein GrpE</fullName>
    </recommendedName>
    <alternativeName>
        <fullName evidence="1">HSP-70 cofactor</fullName>
    </alternativeName>
</protein>
<name>GRPE_PSEF5</name>
<proteinExistence type="inferred from homology"/>